<reference key="1">
    <citation type="journal article" date="1998" name="DNA Res.">
        <title>Structural analysis of Arabidopsis thaliana chromosome 5. VIII. Sequence features of the regions of 1,081,958 bp covered by seventeen physically assigned P1 and TAC clones.</title>
        <authorList>
            <person name="Asamizu E."/>
            <person name="Sato S."/>
            <person name="Kaneko T."/>
            <person name="Nakamura Y."/>
            <person name="Kotani H."/>
            <person name="Miyajima N."/>
            <person name="Tabata S."/>
        </authorList>
    </citation>
    <scope>NUCLEOTIDE SEQUENCE [LARGE SCALE GENOMIC DNA]</scope>
    <source>
        <strain>cv. Columbia</strain>
    </source>
</reference>
<reference key="2">
    <citation type="journal article" date="2000" name="DNA Res.">
        <title>Structural analysis of Arabidopsis thaliana chromosome 5. X. Sequence features of the regions of 3,076,755 bp covered by sixty P1 and TAC clones.</title>
        <authorList>
            <person name="Sato S."/>
            <person name="Nakamura Y."/>
            <person name="Kaneko T."/>
            <person name="Katoh T."/>
            <person name="Asamizu E."/>
            <person name="Kotani H."/>
            <person name="Tabata S."/>
        </authorList>
    </citation>
    <scope>NUCLEOTIDE SEQUENCE [LARGE SCALE GENOMIC DNA]</scope>
    <source>
        <strain>cv. Columbia</strain>
    </source>
</reference>
<reference key="3">
    <citation type="journal article" date="2017" name="Plant J.">
        <title>Araport11: a complete reannotation of the Arabidopsis thaliana reference genome.</title>
        <authorList>
            <person name="Cheng C.Y."/>
            <person name="Krishnakumar V."/>
            <person name="Chan A.P."/>
            <person name="Thibaud-Nissen F."/>
            <person name="Schobel S."/>
            <person name="Town C.D."/>
        </authorList>
    </citation>
    <scope>GENOME REANNOTATION</scope>
    <source>
        <strain>cv. Columbia</strain>
    </source>
</reference>
<reference key="4">
    <citation type="submission" date="2005-06" db="EMBL/GenBank/DDBJ databases">
        <title>Full-length cDNA from Arabidopsis thaliana.</title>
        <authorList>
            <person name="Alexandrov N.N."/>
            <person name="Brover V.V."/>
            <person name="Troukhan M.E."/>
            <person name="Lu Y.-P."/>
            <person name="Flavell R.B."/>
            <person name="Feldmann K.A."/>
        </authorList>
    </citation>
    <scope>NUCLEOTIDE SEQUENCE [LARGE SCALE MRNA]</scope>
</reference>
<reference key="5">
    <citation type="journal article" date="2005" name="Plant Physiol.">
        <title>Genome organization of more than 300 defensin-like genes in Arabidopsis.</title>
        <authorList>
            <person name="Silverstein K.A.T."/>
            <person name="Graham M.A."/>
            <person name="Paape T.D."/>
            <person name="VandenBosch K.A."/>
        </authorList>
    </citation>
    <scope>GENE FAMILY</scope>
</reference>
<reference key="6">
    <citation type="journal article" date="2012" name="PLoS Biol.">
        <title>A species-specific cluster of defensin-like genes encodes diffusible pollen tube attractants in Arabidopsis.</title>
        <authorList>
            <person name="Takeuchi H."/>
            <person name="Higashiyama T."/>
        </authorList>
    </citation>
    <scope>FUNCTION</scope>
    <scope>GENE FAMILY</scope>
    <scope>NOMENCLATURE</scope>
    <scope>TISSUE SPECIFICITY</scope>
    <scope>SUBCELLULAR LOCATION</scope>
</reference>
<reference key="7">
    <citation type="journal article" date="2017" name="Nat. Commun.">
        <title>Structural basis for receptor recognition of pollen tube attraction peptides.</title>
        <authorList>
            <person name="Zhang X."/>
            <person name="Liu W."/>
            <person name="Nagae T.T."/>
            <person name="Takeuchi H."/>
            <person name="Zhang H."/>
            <person name="Han Z."/>
            <person name="Higashiyama T."/>
            <person name="Chai J."/>
        </authorList>
    </citation>
    <scope>INTERACTION WITH PRK6</scope>
</reference>
<sequence>MKCPSIFLTLLIFVSSCTSILINESSDEQRIYSFSPTTSPFDPRSLNQELKIGRIGYCFDCARACMRRGKYIRTCSFERKLCRCSISDIK</sequence>
<gene>
    <name evidence="8" type="primary">LURE1.4</name>
    <name evidence="8" type="synonym">CRP810_1.4</name>
    <name type="ordered locus">At5g43518</name>
    <name evidence="10" type="ORF">K9D7</name>
    <name evidence="11" type="ORF">MWF20</name>
</gene>
<organism>
    <name type="scientific">Arabidopsis thaliana</name>
    <name type="common">Mouse-ear cress</name>
    <dbReference type="NCBI Taxonomy" id="3702"/>
    <lineage>
        <taxon>Eukaryota</taxon>
        <taxon>Viridiplantae</taxon>
        <taxon>Streptophyta</taxon>
        <taxon>Embryophyta</taxon>
        <taxon>Tracheophyta</taxon>
        <taxon>Spermatophyta</taxon>
        <taxon>Magnoliopsida</taxon>
        <taxon>eudicotyledons</taxon>
        <taxon>Gunneridae</taxon>
        <taxon>Pentapetalae</taxon>
        <taxon>rosids</taxon>
        <taxon>malvids</taxon>
        <taxon>Brassicales</taxon>
        <taxon>Brassicaceae</taxon>
        <taxon>Camelineae</taxon>
        <taxon>Arabidopsis</taxon>
    </lineage>
</organism>
<dbReference type="EMBL" id="AB016875">
    <property type="status" value="NOT_ANNOTATED_CDS"/>
    <property type="molecule type" value="Genomic_DNA"/>
</dbReference>
<dbReference type="EMBL" id="AB025638">
    <property type="status" value="NOT_ANNOTATED_CDS"/>
    <property type="molecule type" value="Genomic_DNA"/>
</dbReference>
<dbReference type="EMBL" id="CP002688">
    <property type="protein sequence ID" value="AED94975.1"/>
    <property type="molecule type" value="Genomic_DNA"/>
</dbReference>
<dbReference type="EMBL" id="DQ108756">
    <property type="status" value="NOT_ANNOTATED_CDS"/>
    <property type="molecule type" value="mRNA"/>
</dbReference>
<dbReference type="RefSeq" id="NP_001032004.1">
    <property type="nucleotide sequence ID" value="NM_001036927.3"/>
</dbReference>
<dbReference type="SMR" id="P0CAY6"/>
<dbReference type="STRING" id="3702.P0CAY6"/>
<dbReference type="GlyCosmos" id="P0CAY6">
    <property type="glycosylation" value="1 site, No reported glycans"/>
</dbReference>
<dbReference type="GlyGen" id="P0CAY6">
    <property type="glycosylation" value="1 site"/>
</dbReference>
<dbReference type="PaxDb" id="3702-AT5G43518.1"/>
<dbReference type="EnsemblPlants" id="AT5G43518.1">
    <property type="protein sequence ID" value="AT5G43518.1"/>
    <property type="gene ID" value="AT5G43518"/>
</dbReference>
<dbReference type="GeneID" id="3771419"/>
<dbReference type="Gramene" id="AT5G43518.1">
    <property type="protein sequence ID" value="AT5G43518.1"/>
    <property type="gene ID" value="AT5G43518"/>
</dbReference>
<dbReference type="KEGG" id="ath:AT5G43518"/>
<dbReference type="Araport" id="AT5G43518"/>
<dbReference type="TAIR" id="AT5G43518">
    <property type="gene designation" value="LURE1.4"/>
</dbReference>
<dbReference type="HOGENOM" id="CLU_180309_0_0_1"/>
<dbReference type="InParanoid" id="P0CAY6"/>
<dbReference type="OMA" id="FNQAASP"/>
<dbReference type="PhylomeDB" id="P0CAY6"/>
<dbReference type="PRO" id="PR:P0CAY6"/>
<dbReference type="Proteomes" id="UP000006548">
    <property type="component" value="Chromosome 5"/>
</dbReference>
<dbReference type="GO" id="GO:0005576">
    <property type="term" value="C:extracellular region"/>
    <property type="evidence" value="ECO:0007669"/>
    <property type="project" value="UniProtKB-SubCell"/>
</dbReference>
<dbReference type="GO" id="GO:0010183">
    <property type="term" value="P:pollen tube guidance"/>
    <property type="evidence" value="ECO:0000314"/>
    <property type="project" value="TAIR"/>
</dbReference>
<dbReference type="CDD" id="cd21804">
    <property type="entry name" value="DEFL_AtLURE1-like"/>
    <property type="match status" value="1"/>
</dbReference>
<dbReference type="InterPro" id="IPR047497">
    <property type="entry name" value="DEFL_AtLURE1-like"/>
</dbReference>
<feature type="signal peptide" evidence="3">
    <location>
        <begin position="1"/>
        <end position="19"/>
    </location>
</feature>
<feature type="chain" id="PRO_0000379708" description="Protein LURE 1.4">
    <location>
        <begin position="20"/>
        <end position="90"/>
    </location>
</feature>
<feature type="region of interest" description="PRK6 binding" evidence="2">
    <location>
        <begin position="67"/>
        <end position="87"/>
    </location>
</feature>
<feature type="glycosylation site" description="N-linked (GlcNAc...) asparagine" evidence="4">
    <location>
        <position position="23"/>
    </location>
</feature>
<feature type="disulfide bond" evidence="1">
    <location>
        <begin position="58"/>
        <end position="75"/>
    </location>
</feature>
<feature type="disulfide bond" evidence="1">
    <location>
        <begin position="61"/>
        <end position="82"/>
    </location>
</feature>
<feature type="disulfide bond" evidence="1">
    <location>
        <begin position="65"/>
        <end position="84"/>
    </location>
</feature>
<feature type="sequence conflict" description="In Ref. 4; DQ108756." evidence="9" ref="4">
    <original>CPS</original>
    <variation>LPF</variation>
    <location>
        <begin position="3"/>
        <end position="5"/>
    </location>
</feature>
<feature type="sequence conflict" description="In Ref. 4; DQ108756." evidence="9" ref="4">
    <original>F</original>
    <variation>L</variation>
    <location>
        <position position="13"/>
    </location>
</feature>
<keyword id="KW-1015">Disulfide bond</keyword>
<keyword id="KW-0325">Glycoprotein</keyword>
<keyword id="KW-1185">Reference proteome</keyword>
<keyword id="KW-0964">Secreted</keyword>
<keyword id="KW-0732">Signal</keyword>
<name>LUR14_ARATH</name>
<protein>
    <recommendedName>
        <fullName evidence="8">Protein LURE 1.4</fullName>
        <shortName evidence="8">AtLURE1.4</shortName>
    </recommendedName>
    <alternativeName>
        <fullName evidence="8">Cysteine-Rich Peptide 810_1.4</fullName>
        <shortName evidence="8">CRP810_1.4</shortName>
    </alternativeName>
    <alternativeName>
        <fullName evidence="7">Defensin-like protein 216</fullName>
    </alternativeName>
</protein>
<evidence type="ECO:0000250" key="1">
    <source>
        <dbReference type="UniProtKB" id="Q09198"/>
    </source>
</evidence>
<evidence type="ECO:0000250" key="2">
    <source>
        <dbReference type="UniProtKB" id="Q4VP08"/>
    </source>
</evidence>
<evidence type="ECO:0000255" key="3"/>
<evidence type="ECO:0000255" key="4">
    <source>
        <dbReference type="PROSITE-ProRule" id="PRU00498"/>
    </source>
</evidence>
<evidence type="ECO:0000269" key="5">
    <source>
    </source>
</evidence>
<evidence type="ECO:0000269" key="6">
    <source>
    </source>
</evidence>
<evidence type="ECO:0000303" key="7">
    <source>
    </source>
</evidence>
<evidence type="ECO:0000303" key="8">
    <source>
    </source>
</evidence>
<evidence type="ECO:0000305" key="9"/>
<evidence type="ECO:0000312" key="10">
    <source>
        <dbReference type="EMBL" id="AB016875"/>
    </source>
</evidence>
<evidence type="ECO:0000312" key="11">
    <source>
        <dbReference type="EMBL" id="AB025638"/>
    </source>
</evidence>
<accession>P0CAY6</accession>
<proteinExistence type="evidence at protein level"/>
<comment type="function">
    <text evidence="5">Pollen tube attractants guiding pollen tubes to the ovular micropyle.</text>
</comment>
<comment type="subunit">
    <text evidence="6">Binds to PRK6 LRRs.</text>
</comment>
<comment type="subcellular location">
    <subcellularLocation>
        <location evidence="5">Secreted</location>
    </subcellularLocation>
    <text evidence="5">found at the micropylar end of the female gametophyte, possibly at the filiform apparatus of the synergid cell. Difuses to the surface of the funiculus of the ovule through the micropyle.</text>
</comment>
<comment type="tissue specificity">
    <text evidence="5">Expressed in the pistil. Detected exclusively in the synergid cells.</text>
</comment>
<comment type="similarity">
    <text evidence="9">Belongs to the DEFL family.</text>
</comment>
<comment type="caution">
    <text evidence="9">Lacks 1 of the 4 disulfide bonds, which are conserved features of the family.</text>
</comment>